<organism>
    <name type="scientific">Mus musculus</name>
    <name type="common">Mouse</name>
    <dbReference type="NCBI Taxonomy" id="10090"/>
    <lineage>
        <taxon>Eukaryota</taxon>
        <taxon>Metazoa</taxon>
        <taxon>Chordata</taxon>
        <taxon>Craniata</taxon>
        <taxon>Vertebrata</taxon>
        <taxon>Euteleostomi</taxon>
        <taxon>Mammalia</taxon>
        <taxon>Eutheria</taxon>
        <taxon>Euarchontoglires</taxon>
        <taxon>Glires</taxon>
        <taxon>Rodentia</taxon>
        <taxon>Myomorpha</taxon>
        <taxon>Muroidea</taxon>
        <taxon>Muridae</taxon>
        <taxon>Murinae</taxon>
        <taxon>Mus</taxon>
        <taxon>Mus</taxon>
    </lineage>
</organism>
<evidence type="ECO:0000250" key="1"/>
<evidence type="ECO:0000250" key="2">
    <source>
        <dbReference type="UniProtKB" id="Q96EP5"/>
    </source>
</evidence>
<evidence type="ECO:0000255" key="3">
    <source>
        <dbReference type="PROSITE-ProRule" id="PRU00176"/>
    </source>
</evidence>
<evidence type="ECO:0000256" key="4">
    <source>
        <dbReference type="SAM" id="MobiDB-lite"/>
    </source>
</evidence>
<evidence type="ECO:0000269" key="5">
    <source>
    </source>
</evidence>
<evidence type="ECO:0000303" key="6">
    <source>
    </source>
</evidence>
<evidence type="ECO:0000305" key="7"/>
<evidence type="ECO:0007744" key="8">
    <source>
    </source>
</evidence>
<gene>
    <name type="primary">Dazap1</name>
</gene>
<proteinExistence type="evidence at protein level"/>
<name>DAZP1_MOUSE</name>
<comment type="function">
    <text evidence="1">RNA-binding protein, which may be required during spermatogenesis.</text>
</comment>
<comment type="subunit">
    <text evidence="1">Interacts with DAZ and DAZL.</text>
</comment>
<comment type="subcellular location">
    <subcellularLocation>
        <location>Cytoplasm</location>
    </subcellularLocation>
    <subcellularLocation>
        <location>Nucleus</location>
    </subcellularLocation>
    <text>Predominantly cytoplasmic. Nuclear at some stages of spermatozoides development. In midpachytene spermatocytes, it is localized in both the cytoplasm and the nuclei and is clearly excluded from the sex vesicles. In round spermatids, it localizes mainly in the nuclei, whereas in elongated spermatids, it localizes to the cytoplasm.</text>
</comment>
<comment type="alternative products">
    <event type="alternative splicing"/>
    <isoform>
        <id>Q9JII5-1</id>
        <name>1</name>
        <sequence type="displayed"/>
    </isoform>
    <isoform>
        <id>Q9JII5-2</id>
        <name>2</name>
        <sequence type="described" ref="VSP_009443"/>
    </isoform>
</comment>
<comment type="tissue specificity">
    <text evidence="5">Mainly expressed in testis. Expressed at much lower level in liver, heart and brain. Also expressed in ovary. Expressed throughout testes development, in both the prenatal and postnatal periods.</text>
</comment>
<comment type="developmental stage">
    <text>First expressed in midpachytene spermatocytes in stage VII tubules.</text>
</comment>
<comment type="PTM">
    <text evidence="1">Acetylation at Lys-150 is predominantly observed in the nuclear fraction, and may regulate nucleocytoplasmic transport.</text>
</comment>
<dbReference type="EMBL" id="AF225910">
    <property type="protein sequence ID" value="AAF81071.1"/>
    <property type="molecule type" value="mRNA"/>
</dbReference>
<dbReference type="EMBL" id="BC049355">
    <property type="protein sequence ID" value="AAH49355.1"/>
    <property type="molecule type" value="mRNA"/>
</dbReference>
<dbReference type="CCDS" id="CCDS35977.1">
    <molecule id="Q9JII5-2"/>
</dbReference>
<dbReference type="CCDS" id="CCDS48626.1">
    <molecule id="Q9JII5-1"/>
</dbReference>
<dbReference type="RefSeq" id="NP_001116076.1">
    <molecule id="Q9JII5-1"/>
    <property type="nucleotide sequence ID" value="NM_001122604.2"/>
</dbReference>
<dbReference type="RefSeq" id="NP_001116077.1">
    <property type="nucleotide sequence ID" value="NM_001122605.1"/>
</dbReference>
<dbReference type="RefSeq" id="NP_573451.2">
    <molecule id="Q9JII5-2"/>
    <property type="nucleotide sequence ID" value="NM_133188.3"/>
</dbReference>
<dbReference type="SMR" id="Q9JII5"/>
<dbReference type="BioGRID" id="213939">
    <property type="interactions" value="17"/>
</dbReference>
<dbReference type="FunCoup" id="Q9JII5">
    <property type="interactions" value="3566"/>
</dbReference>
<dbReference type="STRING" id="10090.ENSMUSP00000089958"/>
<dbReference type="GlyGen" id="Q9JII5">
    <property type="glycosylation" value="1 site"/>
</dbReference>
<dbReference type="iPTMnet" id="Q9JII5"/>
<dbReference type="PhosphoSitePlus" id="Q9JII5"/>
<dbReference type="SwissPalm" id="Q9JII5"/>
<dbReference type="REPRODUCTION-2DPAGE" id="Q9JII5"/>
<dbReference type="jPOST" id="Q9JII5"/>
<dbReference type="PaxDb" id="10090-ENSMUSP00000089958"/>
<dbReference type="ProteomicsDB" id="277951">
    <molecule id="Q9JII5-1"/>
</dbReference>
<dbReference type="ProteomicsDB" id="277952">
    <molecule id="Q9JII5-2"/>
</dbReference>
<dbReference type="Pumba" id="Q9JII5"/>
<dbReference type="Antibodypedia" id="1414">
    <property type="antibodies" value="196 antibodies from 25 providers"/>
</dbReference>
<dbReference type="DNASU" id="70248"/>
<dbReference type="Ensembl" id="ENSMUST00000092305.6">
    <molecule id="Q9JII5-1"/>
    <property type="protein sequence ID" value="ENSMUSP00000089958.6"/>
    <property type="gene ID" value="ENSMUSG00000069565.13"/>
</dbReference>
<dbReference type="Ensembl" id="ENSMUST00000105362.8">
    <molecule id="Q9JII5-2"/>
    <property type="protein sequence ID" value="ENSMUSP00000101001.2"/>
    <property type="gene ID" value="ENSMUSG00000069565.13"/>
</dbReference>
<dbReference type="GeneID" id="70248"/>
<dbReference type="KEGG" id="mmu:70248"/>
<dbReference type="UCSC" id="uc007gcl.2">
    <molecule id="Q9JII5-2"/>
    <property type="organism name" value="mouse"/>
</dbReference>
<dbReference type="UCSC" id="uc007gcm.2">
    <molecule id="Q9JII5-1"/>
    <property type="organism name" value="mouse"/>
</dbReference>
<dbReference type="AGR" id="MGI:1917498"/>
<dbReference type="CTD" id="26528"/>
<dbReference type="MGI" id="MGI:1917498">
    <property type="gene designation" value="Dazap1"/>
</dbReference>
<dbReference type="VEuPathDB" id="HostDB:ENSMUSG00000069565"/>
<dbReference type="eggNOG" id="KOG4205">
    <property type="taxonomic scope" value="Eukaryota"/>
</dbReference>
<dbReference type="GeneTree" id="ENSGT00940000156757"/>
<dbReference type="HOGENOM" id="CLU_028569_1_0_1"/>
<dbReference type="InParanoid" id="Q9JII5"/>
<dbReference type="OMA" id="PCNPRSQ"/>
<dbReference type="OrthoDB" id="1875751at2759"/>
<dbReference type="BioGRID-ORCS" id="70248">
    <property type="hits" value="10 hits in 80 CRISPR screens"/>
</dbReference>
<dbReference type="ChiTaRS" id="Dazap1">
    <property type="organism name" value="mouse"/>
</dbReference>
<dbReference type="PRO" id="PR:Q9JII5"/>
<dbReference type="Proteomes" id="UP000000589">
    <property type="component" value="Chromosome 10"/>
</dbReference>
<dbReference type="RNAct" id="Q9JII5">
    <property type="molecule type" value="protein"/>
</dbReference>
<dbReference type="Bgee" id="ENSMUSG00000069565">
    <property type="expression patterns" value="Expressed in embryonic brain and 268 other cell types or tissues"/>
</dbReference>
<dbReference type="ExpressionAtlas" id="Q9JII5">
    <property type="expression patterns" value="baseline and differential"/>
</dbReference>
<dbReference type="GO" id="GO:0005737">
    <property type="term" value="C:cytoplasm"/>
    <property type="evidence" value="ECO:0000314"/>
    <property type="project" value="UniProtKB"/>
</dbReference>
<dbReference type="GO" id="GO:0005829">
    <property type="term" value="C:cytosol"/>
    <property type="evidence" value="ECO:0007669"/>
    <property type="project" value="Ensembl"/>
</dbReference>
<dbReference type="GO" id="GO:0001673">
    <property type="term" value="C:male germ cell nucleus"/>
    <property type="evidence" value="ECO:0000314"/>
    <property type="project" value="MGI"/>
</dbReference>
<dbReference type="GO" id="GO:0005654">
    <property type="term" value="C:nucleoplasm"/>
    <property type="evidence" value="ECO:0007669"/>
    <property type="project" value="Ensembl"/>
</dbReference>
<dbReference type="GO" id="GO:0005634">
    <property type="term" value="C:nucleus"/>
    <property type="evidence" value="ECO:0000314"/>
    <property type="project" value="UniProtKB"/>
</dbReference>
<dbReference type="GO" id="GO:1990904">
    <property type="term" value="C:ribonucleoprotein complex"/>
    <property type="evidence" value="ECO:0007669"/>
    <property type="project" value="Ensembl"/>
</dbReference>
<dbReference type="GO" id="GO:0034046">
    <property type="term" value="F:poly(G) binding"/>
    <property type="evidence" value="ECO:0007669"/>
    <property type="project" value="Ensembl"/>
</dbReference>
<dbReference type="GO" id="GO:0008266">
    <property type="term" value="F:poly(U) RNA binding"/>
    <property type="evidence" value="ECO:0007669"/>
    <property type="project" value="Ensembl"/>
</dbReference>
<dbReference type="GO" id="GO:0003723">
    <property type="term" value="F:RNA binding"/>
    <property type="evidence" value="ECO:0000247"/>
    <property type="project" value="MGI"/>
</dbReference>
<dbReference type="GO" id="GO:0035613">
    <property type="term" value="F:RNA stem-loop binding"/>
    <property type="evidence" value="ECO:0000314"/>
    <property type="project" value="MGI"/>
</dbReference>
<dbReference type="GO" id="GO:0030154">
    <property type="term" value="P:cell differentiation"/>
    <property type="evidence" value="ECO:0007669"/>
    <property type="project" value="UniProtKB-KW"/>
</dbReference>
<dbReference type="GO" id="GO:0048144">
    <property type="term" value="P:fibroblast proliferation"/>
    <property type="evidence" value="ECO:0000315"/>
    <property type="project" value="MGI"/>
</dbReference>
<dbReference type="GO" id="GO:0001893">
    <property type="term" value="P:maternal placenta development"/>
    <property type="evidence" value="ECO:0000315"/>
    <property type="project" value="MGI"/>
</dbReference>
<dbReference type="GO" id="GO:0048026">
    <property type="term" value="P:positive regulation of mRNA splicing, via spliceosome"/>
    <property type="evidence" value="ECO:0000315"/>
    <property type="project" value="MGI"/>
</dbReference>
<dbReference type="GO" id="GO:0007283">
    <property type="term" value="P:spermatogenesis"/>
    <property type="evidence" value="ECO:0000315"/>
    <property type="project" value="MGI"/>
</dbReference>
<dbReference type="CDD" id="cd12574">
    <property type="entry name" value="RRM1_DAZAP1"/>
    <property type="match status" value="1"/>
</dbReference>
<dbReference type="CDD" id="cd12327">
    <property type="entry name" value="RRM2_DAZAP1"/>
    <property type="match status" value="1"/>
</dbReference>
<dbReference type="FunFam" id="3.30.70.330:FF:000129">
    <property type="entry name" value="DAZ-associated protein 1 isoform X1"/>
    <property type="match status" value="1"/>
</dbReference>
<dbReference type="FunFam" id="3.30.70.330:FF:000093">
    <property type="entry name" value="Putative DAZ-associated protein 1"/>
    <property type="match status" value="1"/>
</dbReference>
<dbReference type="Gene3D" id="3.30.70.330">
    <property type="match status" value="2"/>
</dbReference>
<dbReference type="InterPro" id="IPR034134">
    <property type="entry name" value="DAZAP1_RRM1"/>
</dbReference>
<dbReference type="InterPro" id="IPR034131">
    <property type="entry name" value="DAZAP1_RRM2"/>
</dbReference>
<dbReference type="InterPro" id="IPR012677">
    <property type="entry name" value="Nucleotide-bd_a/b_plait_sf"/>
</dbReference>
<dbReference type="InterPro" id="IPR035979">
    <property type="entry name" value="RBD_domain_sf"/>
</dbReference>
<dbReference type="InterPro" id="IPR000504">
    <property type="entry name" value="RRM_dom"/>
</dbReference>
<dbReference type="PANTHER" id="PTHR48032">
    <property type="entry name" value="RNA-BINDING PROTEIN MUSASHI HOMOLOG RBP6"/>
    <property type="match status" value="1"/>
</dbReference>
<dbReference type="PANTHER" id="PTHR48032:SF18">
    <property type="entry name" value="RRM DOMAIN-CONTAINING PROTEIN"/>
    <property type="match status" value="1"/>
</dbReference>
<dbReference type="Pfam" id="PF00076">
    <property type="entry name" value="RRM_1"/>
    <property type="match status" value="2"/>
</dbReference>
<dbReference type="SMART" id="SM00360">
    <property type="entry name" value="RRM"/>
    <property type="match status" value="2"/>
</dbReference>
<dbReference type="SUPFAM" id="SSF54928">
    <property type="entry name" value="RNA-binding domain, RBD"/>
    <property type="match status" value="2"/>
</dbReference>
<dbReference type="PROSITE" id="PS50102">
    <property type="entry name" value="RRM"/>
    <property type="match status" value="2"/>
</dbReference>
<reference key="1">
    <citation type="journal article" date="2001" name="BMC Genomics">
        <title>Characterization of the mouse Dazap1 gene encoding an RNA-binding protein that interacts with infertility factors DAZ and DAZL.</title>
        <authorList>
            <person name="Dai T."/>
            <person name="Vera Y."/>
            <person name="Salido E.C."/>
            <person name="Yen P.H."/>
        </authorList>
    </citation>
    <scope>NUCLEOTIDE SEQUENCE [MRNA] (ISOFORM 2)</scope>
    <scope>SUBCELLULAR LOCATION</scope>
    <scope>TISSUE SPECIFICITY</scope>
    <source>
        <tissue>Testis</tissue>
    </source>
</reference>
<reference key="2">
    <citation type="journal article" date="2004" name="Genome Res.">
        <title>The status, quality, and expansion of the NIH full-length cDNA project: the Mammalian Gene Collection (MGC).</title>
        <authorList>
            <consortium name="The MGC Project Team"/>
        </authorList>
    </citation>
    <scope>NUCLEOTIDE SEQUENCE [LARGE SCALE MRNA] (ISOFORM 1)</scope>
    <source>
        <strain>C57BL/6J</strain>
        <tissue>Olfactory epithelium</tissue>
    </source>
</reference>
<reference key="3">
    <citation type="journal article" date="2002" name="J. Androl.">
        <title>Deleted in azoospermia associated protein 1 shuttles between nucleus and cytoplasm during normal germ cell maturation.</title>
        <authorList>
            <person name="Vera Y."/>
            <person name="Dai T."/>
            <person name="Hikim A.P."/>
            <person name="Lue Y."/>
            <person name="Salido E.C."/>
            <person name="Swerdloff R.S."/>
            <person name="Yen P.H."/>
        </authorList>
    </citation>
    <scope>SUBCELLULAR LOCATION</scope>
</reference>
<reference key="4">
    <citation type="journal article" date="2010" name="Cell">
        <title>A tissue-specific atlas of mouse protein phosphorylation and expression.</title>
        <authorList>
            <person name="Huttlin E.L."/>
            <person name="Jedrychowski M.P."/>
            <person name="Elias J.E."/>
            <person name="Goswami T."/>
            <person name="Rad R."/>
            <person name="Beausoleil S.A."/>
            <person name="Villen J."/>
            <person name="Haas W."/>
            <person name="Sowa M.E."/>
            <person name="Gygi S.P."/>
        </authorList>
    </citation>
    <scope>IDENTIFICATION BY MASS SPECTROMETRY [LARGE SCALE ANALYSIS]</scope>
    <source>
        <tissue>Brown adipose tissue</tissue>
        <tissue>Heart</tissue>
        <tissue>Kidney</tissue>
        <tissue>Liver</tissue>
        <tissue>Lung</tissue>
        <tissue>Pancreas</tissue>
        <tissue>Spleen</tissue>
        <tissue>Testis</tissue>
    </source>
</reference>
<reference key="5">
    <citation type="journal article" date="2014" name="Mol. Cell. Proteomics">
        <title>Immunoaffinity enrichment and mass spectrometry analysis of protein methylation.</title>
        <authorList>
            <person name="Guo A."/>
            <person name="Gu H."/>
            <person name="Zhou J."/>
            <person name="Mulhern D."/>
            <person name="Wang Y."/>
            <person name="Lee K.A."/>
            <person name="Yang V."/>
            <person name="Aguiar M."/>
            <person name="Kornhauser J."/>
            <person name="Jia X."/>
            <person name="Ren J."/>
            <person name="Beausoleil S.A."/>
            <person name="Silva J.C."/>
            <person name="Vemulapalli V."/>
            <person name="Bedford M.T."/>
            <person name="Comb M.J."/>
        </authorList>
    </citation>
    <scope>METHYLATION [LARGE SCALE ANALYSIS] AT ARG-253</scope>
    <scope>IDENTIFICATION BY MASS SPECTROMETRY [LARGE SCALE ANALYSIS]</scope>
    <source>
        <tissue>Embryo</tissue>
    </source>
</reference>
<protein>
    <recommendedName>
        <fullName>DAZ-associated protein 1</fullName>
    </recommendedName>
    <alternativeName>
        <fullName>Deleted in azoospermia-associated protein 1</fullName>
    </alternativeName>
</protein>
<sequence length="406" mass="43214">MNSAGADEIGKLFVGGLDWSTTQETLRSYFSQYGEVVDCVIMKDKTTNQSRGFGFVKFKDPNCVGTVLASRPHTLDGRNIDPKPCTPRGMQPERTRPKEGWQKGPRSDSSKSNKIFVGGIPHNCGETELREYFKKFGVVTEVVMIYDAEKQRPRGFGFITFEDEQSVDQAVNMHFHDIMGKKVEVKRAEPRDSKNQAPGQPGASQWGSRVAPSAANGWAGQPPPTWQQGYGPQGMWVPAGQAIGGYGPPPAGRGAPPPPPPFTSYIVSTPPGGFPPPQGFPQGYGAPPQFSFGYGPPPPPPDQFAPPGVPPPPATPGAAPLAFPPPPSQAAPDMSKPPTAQPDFPYGQYGYGQDLSGFGQGFSDPSQQPPSYGGPSVPGSGGPPAGGSGFGRGQNHNVQGFHPYRR</sequence>
<keyword id="KW-0007">Acetylation</keyword>
<keyword id="KW-0025">Alternative splicing</keyword>
<keyword id="KW-0963">Cytoplasm</keyword>
<keyword id="KW-0217">Developmental protein</keyword>
<keyword id="KW-0221">Differentiation</keyword>
<keyword id="KW-0488">Methylation</keyword>
<keyword id="KW-0539">Nucleus</keyword>
<keyword id="KW-1185">Reference proteome</keyword>
<keyword id="KW-0677">Repeat</keyword>
<keyword id="KW-0694">RNA-binding</keyword>
<keyword id="KW-0744">Spermatogenesis</keyword>
<accession>Q9JII5</accession>
<feature type="chain" id="PRO_0000081566" description="DAZ-associated protein 1">
    <location>
        <begin position="1"/>
        <end position="406"/>
    </location>
</feature>
<feature type="domain" description="RRM 1" evidence="3">
    <location>
        <begin position="10"/>
        <end position="97"/>
    </location>
</feature>
<feature type="domain" description="RRM 2" evidence="3">
    <location>
        <begin position="113"/>
        <end position="190"/>
    </location>
</feature>
<feature type="region of interest" description="Disordered" evidence="4">
    <location>
        <begin position="74"/>
        <end position="117"/>
    </location>
</feature>
<feature type="region of interest" description="Disordered" evidence="4">
    <location>
        <begin position="186"/>
        <end position="406"/>
    </location>
</feature>
<feature type="compositionally biased region" description="Basic and acidic residues" evidence="4">
    <location>
        <begin position="91"/>
        <end position="111"/>
    </location>
</feature>
<feature type="compositionally biased region" description="Polar residues" evidence="4">
    <location>
        <begin position="195"/>
        <end position="207"/>
    </location>
</feature>
<feature type="compositionally biased region" description="Pro residues" evidence="4">
    <location>
        <begin position="247"/>
        <end position="262"/>
    </location>
</feature>
<feature type="compositionally biased region" description="Low complexity" evidence="4">
    <location>
        <begin position="280"/>
        <end position="294"/>
    </location>
</feature>
<feature type="compositionally biased region" description="Pro residues" evidence="4">
    <location>
        <begin position="295"/>
        <end position="315"/>
    </location>
</feature>
<feature type="compositionally biased region" description="Low complexity" evidence="4">
    <location>
        <begin position="363"/>
        <end position="378"/>
    </location>
</feature>
<feature type="compositionally biased region" description="Gly residues" evidence="4">
    <location>
        <begin position="379"/>
        <end position="392"/>
    </location>
</feature>
<feature type="modified residue" description="N-acetylmethionine" evidence="2">
    <location>
        <position position="1"/>
    </location>
</feature>
<feature type="modified residue" description="N6-acetyllysine" evidence="2">
    <location>
        <position position="150"/>
    </location>
</feature>
<feature type="modified residue" description="Omega-N-methylarginine" evidence="8">
    <location>
        <position position="253"/>
    </location>
</feature>
<feature type="splice variant" id="VSP_009443" description="In isoform 2." evidence="6">
    <location>
        <position position="102"/>
    </location>
</feature>
<feature type="sequence conflict" description="In Ref. 1; AAF81071." evidence="7" ref="1">
    <original>Q</original>
    <variation>R</variation>
    <location>
        <position position="241"/>
    </location>
</feature>
<feature type="sequence conflict" description="In Ref. 1; AAF81071." evidence="7" ref="1">
    <original>F</original>
    <variation>L</variation>
    <location>
        <position position="358"/>
    </location>
</feature>